<gene>
    <name evidence="1" type="primary">pnp</name>
    <name type="ordered locus">Rv2783c</name>
</gene>
<proteinExistence type="evidence at protein level"/>
<dbReference type="EC" id="2.7.7.8" evidence="1"/>
<dbReference type="EMBL" id="AL123456">
    <property type="protein sequence ID" value="CCP45582.1"/>
    <property type="molecule type" value="Genomic_DNA"/>
</dbReference>
<dbReference type="PIR" id="F70883">
    <property type="entry name" value="F70883"/>
</dbReference>
<dbReference type="RefSeq" id="WP_003414124.1">
    <property type="nucleotide sequence ID" value="NZ_NVQJ01000020.1"/>
</dbReference>
<dbReference type="PDB" id="8WWP">
    <property type="method" value="EM"/>
    <property type="resolution" value="3.12 A"/>
    <property type="chains" value="A/B/C=1-752"/>
</dbReference>
<dbReference type="PDB" id="8WX0">
    <property type="method" value="EM"/>
    <property type="resolution" value="3.70 A"/>
    <property type="chains" value="A/B/C=1-752"/>
</dbReference>
<dbReference type="PDB" id="8WXF">
    <property type="method" value="EM"/>
    <property type="resolution" value="4.00 A"/>
    <property type="chains" value="A/B/C=1-752"/>
</dbReference>
<dbReference type="PDBsum" id="8WWP"/>
<dbReference type="PDBsum" id="8WX0"/>
<dbReference type="PDBsum" id="8WXF"/>
<dbReference type="SMR" id="P9WI57"/>
<dbReference type="FunCoup" id="P9WI57">
    <property type="interactions" value="388"/>
</dbReference>
<dbReference type="STRING" id="83332.Rv2783c"/>
<dbReference type="PaxDb" id="83332-Rv2783c"/>
<dbReference type="DNASU" id="888467"/>
<dbReference type="KEGG" id="mtu:Rv2783c"/>
<dbReference type="KEGG" id="mtv:RVBD_2783c"/>
<dbReference type="TubercuList" id="Rv2783c"/>
<dbReference type="eggNOG" id="COG1185">
    <property type="taxonomic scope" value="Bacteria"/>
</dbReference>
<dbReference type="InParanoid" id="P9WI57"/>
<dbReference type="OrthoDB" id="9804305at2"/>
<dbReference type="PhylomeDB" id="P9WI57"/>
<dbReference type="Proteomes" id="UP000001584">
    <property type="component" value="Chromosome"/>
</dbReference>
<dbReference type="GO" id="GO:0005829">
    <property type="term" value="C:cytosol"/>
    <property type="evidence" value="ECO:0007005"/>
    <property type="project" value="MTBBASE"/>
</dbReference>
<dbReference type="GO" id="GO:0009274">
    <property type="term" value="C:peptidoglycan-based cell wall"/>
    <property type="evidence" value="ECO:0007005"/>
    <property type="project" value="MTBBASE"/>
</dbReference>
<dbReference type="GO" id="GO:0005886">
    <property type="term" value="C:plasma membrane"/>
    <property type="evidence" value="ECO:0007005"/>
    <property type="project" value="MTBBASE"/>
</dbReference>
<dbReference type="GO" id="GO:0000175">
    <property type="term" value="F:3'-5'-RNA exonuclease activity"/>
    <property type="evidence" value="ECO:0000318"/>
    <property type="project" value="GO_Central"/>
</dbReference>
<dbReference type="GO" id="GO:0000287">
    <property type="term" value="F:magnesium ion binding"/>
    <property type="evidence" value="ECO:0007669"/>
    <property type="project" value="UniProtKB-UniRule"/>
</dbReference>
<dbReference type="GO" id="GO:0004654">
    <property type="term" value="F:polyribonucleotide nucleotidyltransferase activity"/>
    <property type="evidence" value="ECO:0000318"/>
    <property type="project" value="GO_Central"/>
</dbReference>
<dbReference type="GO" id="GO:0003723">
    <property type="term" value="F:RNA binding"/>
    <property type="evidence" value="ECO:0007669"/>
    <property type="project" value="UniProtKB-UniRule"/>
</dbReference>
<dbReference type="GO" id="GO:0006402">
    <property type="term" value="P:mRNA catabolic process"/>
    <property type="evidence" value="ECO:0007669"/>
    <property type="project" value="UniProtKB-UniRule"/>
</dbReference>
<dbReference type="GO" id="GO:0006401">
    <property type="term" value="P:RNA catabolic process"/>
    <property type="evidence" value="ECO:0000318"/>
    <property type="project" value="GO_Central"/>
</dbReference>
<dbReference type="GO" id="GO:0006396">
    <property type="term" value="P:RNA processing"/>
    <property type="evidence" value="ECO:0007669"/>
    <property type="project" value="InterPro"/>
</dbReference>
<dbReference type="CDD" id="cd02393">
    <property type="entry name" value="KH-I_PNPase"/>
    <property type="match status" value="1"/>
</dbReference>
<dbReference type="CDD" id="cd11364">
    <property type="entry name" value="RNase_PH_PNPase_2"/>
    <property type="match status" value="1"/>
</dbReference>
<dbReference type="CDD" id="cd04472">
    <property type="entry name" value="S1_PNPase"/>
    <property type="match status" value="1"/>
</dbReference>
<dbReference type="FunFam" id="2.40.50.140:FF:000069">
    <property type="entry name" value="Polyribonucleotide nucleotidyltransferase"/>
    <property type="match status" value="1"/>
</dbReference>
<dbReference type="FunFam" id="3.30.1370.10:FF:000001">
    <property type="entry name" value="Polyribonucleotide nucleotidyltransferase"/>
    <property type="match status" value="1"/>
</dbReference>
<dbReference type="FunFam" id="3.30.230.70:FF:000001">
    <property type="entry name" value="Polyribonucleotide nucleotidyltransferase"/>
    <property type="match status" value="1"/>
</dbReference>
<dbReference type="FunFam" id="3.30.230.70:FF:000002">
    <property type="entry name" value="Polyribonucleotide nucleotidyltransferase"/>
    <property type="match status" value="1"/>
</dbReference>
<dbReference type="Gene3D" id="3.30.230.70">
    <property type="entry name" value="GHMP Kinase, N-terminal domain"/>
    <property type="match status" value="2"/>
</dbReference>
<dbReference type="Gene3D" id="3.30.1370.10">
    <property type="entry name" value="K Homology domain, type 1"/>
    <property type="match status" value="1"/>
</dbReference>
<dbReference type="Gene3D" id="2.40.50.140">
    <property type="entry name" value="Nucleic acid-binding proteins"/>
    <property type="match status" value="1"/>
</dbReference>
<dbReference type="HAMAP" id="MF_01595">
    <property type="entry name" value="PNPase"/>
    <property type="match status" value="1"/>
</dbReference>
<dbReference type="InterPro" id="IPR001247">
    <property type="entry name" value="ExoRNase_PH_dom1"/>
</dbReference>
<dbReference type="InterPro" id="IPR036345">
    <property type="entry name" value="ExoRNase_PH_dom2_sf"/>
</dbReference>
<dbReference type="InterPro" id="IPR014069">
    <property type="entry name" value="GPSI/PNP"/>
</dbReference>
<dbReference type="InterPro" id="IPR004087">
    <property type="entry name" value="KH_dom"/>
</dbReference>
<dbReference type="InterPro" id="IPR004088">
    <property type="entry name" value="KH_dom_type_1"/>
</dbReference>
<dbReference type="InterPro" id="IPR036612">
    <property type="entry name" value="KH_dom_type_1_sf"/>
</dbReference>
<dbReference type="InterPro" id="IPR012340">
    <property type="entry name" value="NA-bd_OB-fold"/>
</dbReference>
<dbReference type="InterPro" id="IPR012162">
    <property type="entry name" value="PNPase"/>
</dbReference>
<dbReference type="InterPro" id="IPR027408">
    <property type="entry name" value="PNPase/RNase_PH_dom_sf"/>
</dbReference>
<dbReference type="InterPro" id="IPR015848">
    <property type="entry name" value="PNPase_PH_RNA-bd_bac/org-type"/>
</dbReference>
<dbReference type="InterPro" id="IPR036456">
    <property type="entry name" value="PNPase_PH_RNA-bd_sf"/>
</dbReference>
<dbReference type="InterPro" id="IPR020568">
    <property type="entry name" value="Ribosomal_Su5_D2-typ_SF"/>
</dbReference>
<dbReference type="InterPro" id="IPR003029">
    <property type="entry name" value="S1_domain"/>
</dbReference>
<dbReference type="NCBIfam" id="TIGR03591">
    <property type="entry name" value="polynuc_phos"/>
    <property type="match status" value="1"/>
</dbReference>
<dbReference type="NCBIfam" id="TIGR02696">
    <property type="entry name" value="pppGpp_PNP"/>
    <property type="match status" value="1"/>
</dbReference>
<dbReference type="NCBIfam" id="NF008805">
    <property type="entry name" value="PRK11824.1"/>
    <property type="match status" value="1"/>
</dbReference>
<dbReference type="PANTHER" id="PTHR11252">
    <property type="entry name" value="POLYRIBONUCLEOTIDE NUCLEOTIDYLTRANSFERASE"/>
    <property type="match status" value="1"/>
</dbReference>
<dbReference type="PANTHER" id="PTHR11252:SF0">
    <property type="entry name" value="POLYRIBONUCLEOTIDE NUCLEOTIDYLTRANSFERASE 1, MITOCHONDRIAL"/>
    <property type="match status" value="1"/>
</dbReference>
<dbReference type="Pfam" id="PF00013">
    <property type="entry name" value="KH_1"/>
    <property type="match status" value="1"/>
</dbReference>
<dbReference type="Pfam" id="PF03726">
    <property type="entry name" value="PNPase"/>
    <property type="match status" value="1"/>
</dbReference>
<dbReference type="Pfam" id="PF01138">
    <property type="entry name" value="RNase_PH"/>
    <property type="match status" value="2"/>
</dbReference>
<dbReference type="Pfam" id="PF00575">
    <property type="entry name" value="S1"/>
    <property type="match status" value="1"/>
</dbReference>
<dbReference type="PIRSF" id="PIRSF005499">
    <property type="entry name" value="PNPase"/>
    <property type="match status" value="1"/>
</dbReference>
<dbReference type="SMART" id="SM00322">
    <property type="entry name" value="KH"/>
    <property type="match status" value="1"/>
</dbReference>
<dbReference type="SMART" id="SM00316">
    <property type="entry name" value="S1"/>
    <property type="match status" value="1"/>
</dbReference>
<dbReference type="SUPFAM" id="SSF54791">
    <property type="entry name" value="Eukaryotic type KH-domain (KH-domain type I)"/>
    <property type="match status" value="1"/>
</dbReference>
<dbReference type="SUPFAM" id="SSF50249">
    <property type="entry name" value="Nucleic acid-binding proteins"/>
    <property type="match status" value="1"/>
</dbReference>
<dbReference type="SUPFAM" id="SSF46915">
    <property type="entry name" value="Polynucleotide phosphorylase/guanosine pentaphosphate synthase (PNPase/GPSI), domain 3"/>
    <property type="match status" value="1"/>
</dbReference>
<dbReference type="SUPFAM" id="SSF55666">
    <property type="entry name" value="Ribonuclease PH domain 2-like"/>
    <property type="match status" value="2"/>
</dbReference>
<dbReference type="SUPFAM" id="SSF54211">
    <property type="entry name" value="Ribosomal protein S5 domain 2-like"/>
    <property type="match status" value="2"/>
</dbReference>
<dbReference type="PROSITE" id="PS50084">
    <property type="entry name" value="KH_TYPE_1"/>
    <property type="match status" value="1"/>
</dbReference>
<dbReference type="PROSITE" id="PS50126">
    <property type="entry name" value="S1"/>
    <property type="match status" value="1"/>
</dbReference>
<keyword id="KW-0002">3D-structure</keyword>
<keyword id="KW-0963">Cytoplasm</keyword>
<keyword id="KW-0460">Magnesium</keyword>
<keyword id="KW-0479">Metal-binding</keyword>
<keyword id="KW-0548">Nucleotidyltransferase</keyword>
<keyword id="KW-1185">Reference proteome</keyword>
<keyword id="KW-0694">RNA-binding</keyword>
<keyword id="KW-0808">Transferase</keyword>
<name>PNP_MYCTU</name>
<evidence type="ECO:0000255" key="1">
    <source>
        <dbReference type="HAMAP-Rule" id="MF_01595"/>
    </source>
</evidence>
<accession>P9WI57</accession>
<accession>L0TDJ4</accession>
<accession>O33325</accession>
<accession>Q7D6L0</accession>
<organism>
    <name type="scientific">Mycobacterium tuberculosis (strain ATCC 25618 / H37Rv)</name>
    <dbReference type="NCBI Taxonomy" id="83332"/>
    <lineage>
        <taxon>Bacteria</taxon>
        <taxon>Bacillati</taxon>
        <taxon>Actinomycetota</taxon>
        <taxon>Actinomycetes</taxon>
        <taxon>Mycobacteriales</taxon>
        <taxon>Mycobacteriaceae</taxon>
        <taxon>Mycobacterium</taxon>
        <taxon>Mycobacterium tuberculosis complex</taxon>
    </lineage>
</organism>
<feature type="chain" id="PRO_0000329724" description="Polyribonucleotide nucleotidyltransferase">
    <location>
        <begin position="1"/>
        <end position="752"/>
    </location>
</feature>
<feature type="domain" description="KH" evidence="1">
    <location>
        <begin position="595"/>
        <end position="654"/>
    </location>
</feature>
<feature type="domain" description="S1 motif" evidence="1">
    <location>
        <begin position="666"/>
        <end position="735"/>
    </location>
</feature>
<feature type="binding site" evidence="1">
    <location>
        <position position="529"/>
    </location>
    <ligand>
        <name>Mg(2+)</name>
        <dbReference type="ChEBI" id="CHEBI:18420"/>
    </ligand>
</feature>
<feature type="binding site" evidence="1">
    <location>
        <position position="535"/>
    </location>
    <ligand>
        <name>Mg(2+)</name>
        <dbReference type="ChEBI" id="CHEBI:18420"/>
    </ligand>
</feature>
<protein>
    <recommendedName>
        <fullName evidence="1">Polyribonucleotide nucleotidyltransferase</fullName>
        <ecNumber evidence="1">2.7.7.8</ecNumber>
    </recommendedName>
    <alternativeName>
        <fullName evidence="1">Polynucleotide phosphorylase</fullName>
        <shortName evidence="1">PNPase</shortName>
    </alternativeName>
</protein>
<reference key="1">
    <citation type="journal article" date="1998" name="Nature">
        <title>Deciphering the biology of Mycobacterium tuberculosis from the complete genome sequence.</title>
        <authorList>
            <person name="Cole S.T."/>
            <person name="Brosch R."/>
            <person name="Parkhill J."/>
            <person name="Garnier T."/>
            <person name="Churcher C.M."/>
            <person name="Harris D.E."/>
            <person name="Gordon S.V."/>
            <person name="Eiglmeier K."/>
            <person name="Gas S."/>
            <person name="Barry C.E. III"/>
            <person name="Tekaia F."/>
            <person name="Badcock K."/>
            <person name="Basham D."/>
            <person name="Brown D."/>
            <person name="Chillingworth T."/>
            <person name="Connor R."/>
            <person name="Davies R.M."/>
            <person name="Devlin K."/>
            <person name="Feltwell T."/>
            <person name="Gentles S."/>
            <person name="Hamlin N."/>
            <person name="Holroyd S."/>
            <person name="Hornsby T."/>
            <person name="Jagels K."/>
            <person name="Krogh A."/>
            <person name="McLean J."/>
            <person name="Moule S."/>
            <person name="Murphy L.D."/>
            <person name="Oliver S."/>
            <person name="Osborne J."/>
            <person name="Quail M.A."/>
            <person name="Rajandream M.A."/>
            <person name="Rogers J."/>
            <person name="Rutter S."/>
            <person name="Seeger K."/>
            <person name="Skelton S."/>
            <person name="Squares S."/>
            <person name="Squares R."/>
            <person name="Sulston J.E."/>
            <person name="Taylor K."/>
            <person name="Whitehead S."/>
            <person name="Barrell B.G."/>
        </authorList>
    </citation>
    <scope>NUCLEOTIDE SEQUENCE [LARGE SCALE GENOMIC DNA]</scope>
    <source>
        <strain>ATCC 25618 / H37Rv</strain>
    </source>
</reference>
<reference key="2">
    <citation type="journal article" date="2011" name="Mol. Cell. Proteomics">
        <title>Proteogenomic analysis of Mycobacterium tuberculosis by high resolution mass spectrometry.</title>
        <authorList>
            <person name="Kelkar D.S."/>
            <person name="Kumar D."/>
            <person name="Kumar P."/>
            <person name="Balakrishnan L."/>
            <person name="Muthusamy B."/>
            <person name="Yadav A.K."/>
            <person name="Shrivastava P."/>
            <person name="Marimuthu A."/>
            <person name="Anand S."/>
            <person name="Sundaram H."/>
            <person name="Kingsbury R."/>
            <person name="Harsha H.C."/>
            <person name="Nair B."/>
            <person name="Prasad T.S."/>
            <person name="Chauhan D.S."/>
            <person name="Katoch K."/>
            <person name="Katoch V.M."/>
            <person name="Kumar P."/>
            <person name="Chaerkady R."/>
            <person name="Ramachandran S."/>
            <person name="Dash D."/>
            <person name="Pandey A."/>
        </authorList>
    </citation>
    <scope>IDENTIFICATION BY MASS SPECTROMETRY [LARGE SCALE ANALYSIS]</scope>
    <source>
        <strain>ATCC 25618 / H37Rv</strain>
    </source>
</reference>
<sequence>MSAAEIDEGVFETTATIDNGSFGTRTIRFETGRLALQAAGAVVAYLDDDNMLLSATTASKNPKEHFDFFPLTVDVEERMYAAGRIPGSFFRREGRPSTDAILTCRLIDRPLRPSFVDGLRNEIQIVVTILSLDPGDLYDVLAINAASASTQLGGLPFSGPIGGVRVALIDGTWVGFPTVDQIERAVFDMVVAGRIVEGDVAIMMVEAEATENVVELVEGGAQAPTESVVAAGLEAAKPFIAALCTAQQELADAAGKSGKPTVDFPVFPDYGEDVYYSVSSVATDELAAALTIGGKAERDQRIDEIKTQVVQRLADTYEGREKEVGAALRALTKKLVRQRILTDHFRIDGRGITDIRALSAEVAVVPRAHGSALFERGETQILGVTTLDMIKMAQQIDSLGPETSKRYMHHYNFPPFSTGETGRVGSPKRREIGHGALAERALVPVLPSVEEFPYAIRQVSEALGSNGSTSMGSVCASTLALLNAGVPLKAPVAGIAMGLVSDDIQVEGAVDGVVERRFVTLTDILGAEDAFGDMDFKVAGTKDFVTALQLDTKLDGIPSQVLAGALEQAKDARLTILEVMAEAIDRPDEMSPYAPRVTTIKVPVDKIGEVIGPKGKVINAITEETGAQISIEDDGTVFVGATDGPSAQAAIDKINAIANPQLPTVGERFLGTVVKTTDFGAFVSLLPGRDGLVHISKLGKGKRIAKVEDVVNVGDKLRVEIADIDKRGKISLILVADEDSTAAATDAATVTS</sequence>
<comment type="function">
    <text evidence="1">Involved in mRNA degradation. Catalyzes the phosphorolysis of single-stranded polyribonucleotides processively in the 3'- to 5'-direction.</text>
</comment>
<comment type="catalytic activity">
    <reaction evidence="1">
        <text>RNA(n+1) + phosphate = RNA(n) + a ribonucleoside 5'-diphosphate</text>
        <dbReference type="Rhea" id="RHEA:22096"/>
        <dbReference type="Rhea" id="RHEA-COMP:14527"/>
        <dbReference type="Rhea" id="RHEA-COMP:17342"/>
        <dbReference type="ChEBI" id="CHEBI:43474"/>
        <dbReference type="ChEBI" id="CHEBI:57930"/>
        <dbReference type="ChEBI" id="CHEBI:140395"/>
        <dbReference type="EC" id="2.7.7.8"/>
    </reaction>
</comment>
<comment type="cofactor">
    <cofactor evidence="1">
        <name>Mg(2+)</name>
        <dbReference type="ChEBI" id="CHEBI:18420"/>
    </cofactor>
</comment>
<comment type="subcellular location">
    <subcellularLocation>
        <location evidence="1">Cytoplasm</location>
    </subcellularLocation>
</comment>
<comment type="similarity">
    <text evidence="1">Belongs to the polyribonucleotide nucleotidyltransferase family.</text>
</comment>